<proteinExistence type="inferred from homology"/>
<comment type="function">
    <text evidence="1">Tetrapolymerization of the monopyrrole PBG into the hydroxymethylbilane pre-uroporphyrinogen in several discrete steps.</text>
</comment>
<comment type="catalytic activity">
    <reaction evidence="1">
        <text>4 porphobilinogen + H2O = hydroxymethylbilane + 4 NH4(+)</text>
        <dbReference type="Rhea" id="RHEA:13185"/>
        <dbReference type="ChEBI" id="CHEBI:15377"/>
        <dbReference type="ChEBI" id="CHEBI:28938"/>
        <dbReference type="ChEBI" id="CHEBI:57845"/>
        <dbReference type="ChEBI" id="CHEBI:58126"/>
        <dbReference type="EC" id="2.5.1.61"/>
    </reaction>
</comment>
<comment type="cofactor">
    <cofactor evidence="1">
        <name>dipyrromethane</name>
        <dbReference type="ChEBI" id="CHEBI:60342"/>
    </cofactor>
    <text evidence="1">Binds 1 dipyrromethane group covalently.</text>
</comment>
<comment type="pathway">
    <text evidence="1">Porphyrin-containing compound metabolism; protoporphyrin-IX biosynthesis; coproporphyrinogen-III from 5-aminolevulinate: step 2/4.</text>
</comment>
<comment type="subunit">
    <text evidence="1">Monomer.</text>
</comment>
<comment type="miscellaneous">
    <text evidence="1">The porphobilinogen subunits are added to the dipyrromethane group.</text>
</comment>
<comment type="similarity">
    <text evidence="1">Belongs to the HMBS family.</text>
</comment>
<keyword id="KW-0627">Porphyrin biosynthesis</keyword>
<keyword id="KW-1185">Reference proteome</keyword>
<keyword id="KW-0808">Transferase</keyword>
<gene>
    <name evidence="1" type="primary">hemC</name>
    <name type="ordered locus">CCNA_00070</name>
</gene>
<dbReference type="EC" id="2.5.1.61" evidence="1"/>
<dbReference type="EMBL" id="CP001340">
    <property type="protein sequence ID" value="ACL93537.1"/>
    <property type="molecule type" value="Genomic_DNA"/>
</dbReference>
<dbReference type="RefSeq" id="WP_010917961.1">
    <property type="nucleotide sequence ID" value="NC_011916.1"/>
</dbReference>
<dbReference type="RefSeq" id="YP_002515445.1">
    <property type="nucleotide sequence ID" value="NC_011916.1"/>
</dbReference>
<dbReference type="SMR" id="B8GXG1"/>
<dbReference type="GeneID" id="7332160"/>
<dbReference type="KEGG" id="ccs:CCNA_00070"/>
<dbReference type="PATRIC" id="fig|565050.3.peg.70"/>
<dbReference type="HOGENOM" id="CLU_019704_1_2_5"/>
<dbReference type="OrthoDB" id="9810298at2"/>
<dbReference type="PhylomeDB" id="B8GXG1"/>
<dbReference type="UniPathway" id="UPA00251">
    <property type="reaction ID" value="UER00319"/>
</dbReference>
<dbReference type="Proteomes" id="UP000001364">
    <property type="component" value="Chromosome"/>
</dbReference>
<dbReference type="GO" id="GO:0005737">
    <property type="term" value="C:cytoplasm"/>
    <property type="evidence" value="ECO:0007669"/>
    <property type="project" value="TreeGrafter"/>
</dbReference>
<dbReference type="GO" id="GO:0004418">
    <property type="term" value="F:hydroxymethylbilane synthase activity"/>
    <property type="evidence" value="ECO:0007669"/>
    <property type="project" value="UniProtKB-UniRule"/>
</dbReference>
<dbReference type="GO" id="GO:0006782">
    <property type="term" value="P:protoporphyrinogen IX biosynthetic process"/>
    <property type="evidence" value="ECO:0007669"/>
    <property type="project" value="UniProtKB-UniRule"/>
</dbReference>
<dbReference type="FunFam" id="3.40.190.10:FF:000005">
    <property type="entry name" value="Porphobilinogen deaminase"/>
    <property type="match status" value="1"/>
</dbReference>
<dbReference type="Gene3D" id="3.40.190.10">
    <property type="entry name" value="Periplasmic binding protein-like II"/>
    <property type="match status" value="2"/>
</dbReference>
<dbReference type="Gene3D" id="3.30.160.40">
    <property type="entry name" value="Porphobilinogen deaminase, C-terminal domain"/>
    <property type="match status" value="1"/>
</dbReference>
<dbReference type="HAMAP" id="MF_00260">
    <property type="entry name" value="Porphobil_deam"/>
    <property type="match status" value="1"/>
</dbReference>
<dbReference type="InterPro" id="IPR000860">
    <property type="entry name" value="HemC"/>
</dbReference>
<dbReference type="InterPro" id="IPR022419">
    <property type="entry name" value="Porphobilin_deaminase_cofac_BS"/>
</dbReference>
<dbReference type="InterPro" id="IPR022417">
    <property type="entry name" value="Porphobilin_deaminase_N"/>
</dbReference>
<dbReference type="InterPro" id="IPR022418">
    <property type="entry name" value="Porphobilinogen_deaminase_C"/>
</dbReference>
<dbReference type="InterPro" id="IPR036803">
    <property type="entry name" value="Porphobilinogen_deaminase_C_sf"/>
</dbReference>
<dbReference type="NCBIfam" id="TIGR00212">
    <property type="entry name" value="hemC"/>
    <property type="match status" value="1"/>
</dbReference>
<dbReference type="PANTHER" id="PTHR11557">
    <property type="entry name" value="PORPHOBILINOGEN DEAMINASE"/>
    <property type="match status" value="1"/>
</dbReference>
<dbReference type="PANTHER" id="PTHR11557:SF0">
    <property type="entry name" value="PORPHOBILINOGEN DEAMINASE"/>
    <property type="match status" value="1"/>
</dbReference>
<dbReference type="Pfam" id="PF01379">
    <property type="entry name" value="Porphobil_deam"/>
    <property type="match status" value="1"/>
</dbReference>
<dbReference type="Pfam" id="PF03900">
    <property type="entry name" value="Porphobil_deamC"/>
    <property type="match status" value="1"/>
</dbReference>
<dbReference type="PIRSF" id="PIRSF001438">
    <property type="entry name" value="4pyrrol_synth_OHMeBilane_synth"/>
    <property type="match status" value="1"/>
</dbReference>
<dbReference type="PRINTS" id="PR00151">
    <property type="entry name" value="PORPHBDMNASE"/>
</dbReference>
<dbReference type="SUPFAM" id="SSF53850">
    <property type="entry name" value="Periplasmic binding protein-like II"/>
    <property type="match status" value="1"/>
</dbReference>
<dbReference type="SUPFAM" id="SSF54782">
    <property type="entry name" value="Porphobilinogen deaminase (hydroxymethylbilane synthase), C-terminal domain"/>
    <property type="match status" value="1"/>
</dbReference>
<dbReference type="PROSITE" id="PS00533">
    <property type="entry name" value="PORPHOBILINOGEN_DEAM"/>
    <property type="match status" value="1"/>
</dbReference>
<organism>
    <name type="scientific">Caulobacter vibrioides (strain NA1000 / CB15N)</name>
    <name type="common">Caulobacter crescentus</name>
    <dbReference type="NCBI Taxonomy" id="565050"/>
    <lineage>
        <taxon>Bacteria</taxon>
        <taxon>Pseudomonadati</taxon>
        <taxon>Pseudomonadota</taxon>
        <taxon>Alphaproteobacteria</taxon>
        <taxon>Caulobacterales</taxon>
        <taxon>Caulobacteraceae</taxon>
        <taxon>Caulobacter</taxon>
    </lineage>
</organism>
<feature type="chain" id="PRO_1000125660" description="Porphobilinogen deaminase">
    <location>
        <begin position="1"/>
        <end position="322"/>
    </location>
</feature>
<feature type="modified residue" description="S-(dipyrrolylmethanemethyl)cysteine" evidence="1">
    <location>
        <position position="252"/>
    </location>
</feature>
<evidence type="ECO:0000255" key="1">
    <source>
        <dbReference type="HAMAP-Rule" id="MF_00260"/>
    </source>
</evidence>
<name>HEM3_CAUVN</name>
<accession>B8GXG1</accession>
<reference key="1">
    <citation type="journal article" date="2010" name="J. Bacteriol.">
        <title>The genetic basis of laboratory adaptation in Caulobacter crescentus.</title>
        <authorList>
            <person name="Marks M.E."/>
            <person name="Castro-Rojas C.M."/>
            <person name="Teiling C."/>
            <person name="Du L."/>
            <person name="Kapatral V."/>
            <person name="Walunas T.L."/>
            <person name="Crosson S."/>
        </authorList>
    </citation>
    <scope>NUCLEOTIDE SEQUENCE [LARGE SCALE GENOMIC DNA]</scope>
    <source>
        <strain>NA1000 / CB15N</strain>
    </source>
</reference>
<sequence length="322" mass="34120">MSRQPPIRIGARGSKLSLAQSGLMQARIAHALGVPAGASKDEIEAAAPLIPIVTSGDRIQDRRLMEIGGKGLFTKEIEEALLDGRIDCAVHSLKDMPAELPPGLVLAATPEREDPRDAFISHVCERLEDLPKGARLGTASLRRQAQALHVRPDLEIVMLRGNVDTRLAKLERGEADAILLAQSGLNRLGLGHLTRSWLDPDACPPAPGQGALVIETRAEDIGAPWLEAVRCRQTTIAVAAERGALLALEGSCRTAIGARAILDGARLSMIVEALTPDGAQRFRREGDITLTGADDIAEARAFGLTLGAEVRAAGGDAIILPE</sequence>
<protein>
    <recommendedName>
        <fullName evidence="1">Porphobilinogen deaminase</fullName>
        <shortName evidence="1">PBG</shortName>
        <ecNumber evidence="1">2.5.1.61</ecNumber>
    </recommendedName>
    <alternativeName>
        <fullName evidence="1">Hydroxymethylbilane synthase</fullName>
        <shortName evidence="1">HMBS</shortName>
    </alternativeName>
    <alternativeName>
        <fullName evidence="1">Pre-uroporphyrinogen synthase</fullName>
    </alternativeName>
</protein>